<feature type="chain" id="PRO_1000056828" description="Nucleotide-binding protein LVIS_0651">
    <location>
        <begin position="1"/>
        <end position="294"/>
    </location>
</feature>
<feature type="binding site" evidence="1">
    <location>
        <begin position="12"/>
        <end position="19"/>
    </location>
    <ligand>
        <name>ATP</name>
        <dbReference type="ChEBI" id="CHEBI:30616"/>
    </ligand>
</feature>
<feature type="binding site" evidence="1">
    <location>
        <begin position="62"/>
        <end position="65"/>
    </location>
    <ligand>
        <name>GTP</name>
        <dbReference type="ChEBI" id="CHEBI:37565"/>
    </ligand>
</feature>
<name>Y651_LEVBA</name>
<protein>
    <recommendedName>
        <fullName evidence="1">Nucleotide-binding protein LVIS_0651</fullName>
    </recommendedName>
</protein>
<proteinExistence type="inferred from homology"/>
<sequence>MTEDIRLVIITGMSGAGKTVAMQSFEDLGYFCIDNMPPSLLPKFWDLVRESGKLSKIALVIDLRSRAFYDEIVRMLNDVAVHGTMNAQVLFLDASDAELVSRYKETRRSHPLARNGRVLEGISRERELLAPIRQAAQLVIDTTKLSPRKLREEIFHNYETETTQAFHIELMSFGFKYGLPIDADIVMDVRFLPNPYYLPELRNQTGMDQPVYDYVMNQPQTEEFYQRFLGLLTTIVPGYKQEGKSSLTIAIGCTGGQHRSVALTQRLGQALGNTYPVHVTHRDIEKRKESANRS</sequence>
<dbReference type="EMBL" id="CP000416">
    <property type="protein sequence ID" value="ABJ63796.1"/>
    <property type="molecule type" value="Genomic_DNA"/>
</dbReference>
<dbReference type="SMR" id="Q03SM6"/>
<dbReference type="STRING" id="387344.LVIS_0651"/>
<dbReference type="KEGG" id="lbr:LVIS_0651"/>
<dbReference type="eggNOG" id="COG1660">
    <property type="taxonomic scope" value="Bacteria"/>
</dbReference>
<dbReference type="HOGENOM" id="CLU_059558_0_0_9"/>
<dbReference type="Proteomes" id="UP000001652">
    <property type="component" value="Chromosome"/>
</dbReference>
<dbReference type="GO" id="GO:0005524">
    <property type="term" value="F:ATP binding"/>
    <property type="evidence" value="ECO:0007669"/>
    <property type="project" value="UniProtKB-UniRule"/>
</dbReference>
<dbReference type="GO" id="GO:0005525">
    <property type="term" value="F:GTP binding"/>
    <property type="evidence" value="ECO:0007669"/>
    <property type="project" value="UniProtKB-UniRule"/>
</dbReference>
<dbReference type="Gene3D" id="3.40.50.300">
    <property type="entry name" value="P-loop containing nucleotide triphosphate hydrolases"/>
    <property type="match status" value="1"/>
</dbReference>
<dbReference type="HAMAP" id="MF_00636">
    <property type="entry name" value="RapZ_like"/>
    <property type="match status" value="1"/>
</dbReference>
<dbReference type="InterPro" id="IPR027417">
    <property type="entry name" value="P-loop_NTPase"/>
</dbReference>
<dbReference type="InterPro" id="IPR005337">
    <property type="entry name" value="RapZ-like"/>
</dbReference>
<dbReference type="InterPro" id="IPR053930">
    <property type="entry name" value="RapZ-like_N"/>
</dbReference>
<dbReference type="InterPro" id="IPR053931">
    <property type="entry name" value="RapZ_C"/>
</dbReference>
<dbReference type="NCBIfam" id="NF003828">
    <property type="entry name" value="PRK05416.1"/>
    <property type="match status" value="1"/>
</dbReference>
<dbReference type="PANTHER" id="PTHR30448">
    <property type="entry name" value="RNASE ADAPTER PROTEIN RAPZ"/>
    <property type="match status" value="1"/>
</dbReference>
<dbReference type="PANTHER" id="PTHR30448:SF0">
    <property type="entry name" value="RNASE ADAPTER PROTEIN RAPZ"/>
    <property type="match status" value="1"/>
</dbReference>
<dbReference type="Pfam" id="PF22740">
    <property type="entry name" value="PapZ_C"/>
    <property type="match status" value="1"/>
</dbReference>
<dbReference type="Pfam" id="PF03668">
    <property type="entry name" value="RapZ-like_N"/>
    <property type="match status" value="1"/>
</dbReference>
<dbReference type="PIRSF" id="PIRSF005052">
    <property type="entry name" value="P-loopkin"/>
    <property type="match status" value="1"/>
</dbReference>
<dbReference type="SUPFAM" id="SSF52540">
    <property type="entry name" value="P-loop containing nucleoside triphosphate hydrolases"/>
    <property type="match status" value="1"/>
</dbReference>
<evidence type="ECO:0000255" key="1">
    <source>
        <dbReference type="HAMAP-Rule" id="MF_00636"/>
    </source>
</evidence>
<keyword id="KW-0067">ATP-binding</keyword>
<keyword id="KW-0342">GTP-binding</keyword>
<keyword id="KW-0547">Nucleotide-binding</keyword>
<keyword id="KW-1185">Reference proteome</keyword>
<accession>Q03SM6</accession>
<organism>
    <name type="scientific">Levilactobacillus brevis (strain ATCC 367 / BCRC 12310 / CIP 105137 / JCM 1170 / LMG 11437 / NCIMB 947 / NCTC 947)</name>
    <name type="common">Lactobacillus brevis</name>
    <dbReference type="NCBI Taxonomy" id="387344"/>
    <lineage>
        <taxon>Bacteria</taxon>
        <taxon>Bacillati</taxon>
        <taxon>Bacillota</taxon>
        <taxon>Bacilli</taxon>
        <taxon>Lactobacillales</taxon>
        <taxon>Lactobacillaceae</taxon>
        <taxon>Levilactobacillus</taxon>
    </lineage>
</organism>
<comment type="function">
    <text evidence="1">Displays ATPase and GTPase activities.</text>
</comment>
<comment type="similarity">
    <text evidence="1">Belongs to the RapZ-like family.</text>
</comment>
<reference key="1">
    <citation type="journal article" date="2006" name="Proc. Natl. Acad. Sci. U.S.A.">
        <title>Comparative genomics of the lactic acid bacteria.</title>
        <authorList>
            <person name="Makarova K.S."/>
            <person name="Slesarev A."/>
            <person name="Wolf Y.I."/>
            <person name="Sorokin A."/>
            <person name="Mirkin B."/>
            <person name="Koonin E.V."/>
            <person name="Pavlov A."/>
            <person name="Pavlova N."/>
            <person name="Karamychev V."/>
            <person name="Polouchine N."/>
            <person name="Shakhova V."/>
            <person name="Grigoriev I."/>
            <person name="Lou Y."/>
            <person name="Rohksar D."/>
            <person name="Lucas S."/>
            <person name="Huang K."/>
            <person name="Goodstein D.M."/>
            <person name="Hawkins T."/>
            <person name="Plengvidhya V."/>
            <person name="Welker D."/>
            <person name="Hughes J."/>
            <person name="Goh Y."/>
            <person name="Benson A."/>
            <person name="Baldwin K."/>
            <person name="Lee J.-H."/>
            <person name="Diaz-Muniz I."/>
            <person name="Dosti B."/>
            <person name="Smeianov V."/>
            <person name="Wechter W."/>
            <person name="Barabote R."/>
            <person name="Lorca G."/>
            <person name="Altermann E."/>
            <person name="Barrangou R."/>
            <person name="Ganesan B."/>
            <person name="Xie Y."/>
            <person name="Rawsthorne H."/>
            <person name="Tamir D."/>
            <person name="Parker C."/>
            <person name="Breidt F."/>
            <person name="Broadbent J.R."/>
            <person name="Hutkins R."/>
            <person name="O'Sullivan D."/>
            <person name="Steele J."/>
            <person name="Unlu G."/>
            <person name="Saier M.H. Jr."/>
            <person name="Klaenhammer T."/>
            <person name="Richardson P."/>
            <person name="Kozyavkin S."/>
            <person name="Weimer B.C."/>
            <person name="Mills D.A."/>
        </authorList>
    </citation>
    <scope>NUCLEOTIDE SEQUENCE [LARGE SCALE GENOMIC DNA]</scope>
    <source>
        <strain>ATCC 367 / BCRC 12310 / CIP 105137 / JCM 1170 / LMG 11437 / NCIMB 947 / NCTC 947</strain>
    </source>
</reference>
<gene>
    <name type="ordered locus">LVIS_0651</name>
</gene>